<proteinExistence type="inferred from homology"/>
<feature type="chain" id="PRO_1000195454" description="6,7-dimethyl-8-ribityllumazine synthase">
    <location>
        <begin position="1"/>
        <end position="161"/>
    </location>
</feature>
<feature type="active site" description="Proton donor" evidence="1">
    <location>
        <position position="93"/>
    </location>
</feature>
<feature type="binding site" evidence="1">
    <location>
        <position position="31"/>
    </location>
    <ligand>
        <name>5-amino-6-(D-ribitylamino)uracil</name>
        <dbReference type="ChEBI" id="CHEBI:15934"/>
    </ligand>
</feature>
<feature type="binding site" evidence="1">
    <location>
        <begin position="63"/>
        <end position="65"/>
    </location>
    <ligand>
        <name>5-amino-6-(D-ribitylamino)uracil</name>
        <dbReference type="ChEBI" id="CHEBI:15934"/>
    </ligand>
</feature>
<feature type="binding site" evidence="1">
    <location>
        <begin position="85"/>
        <end position="87"/>
    </location>
    <ligand>
        <name>5-amino-6-(D-ribitylamino)uracil</name>
        <dbReference type="ChEBI" id="CHEBI:15934"/>
    </ligand>
</feature>
<feature type="binding site" evidence="1">
    <location>
        <begin position="90"/>
        <end position="91"/>
    </location>
    <ligand>
        <name>(2S)-2-hydroxy-3-oxobutyl phosphate</name>
        <dbReference type="ChEBI" id="CHEBI:58830"/>
    </ligand>
</feature>
<feature type="binding site" evidence="1">
    <location>
        <position position="118"/>
    </location>
    <ligand>
        <name>5-amino-6-(D-ribitylamino)uracil</name>
        <dbReference type="ChEBI" id="CHEBI:15934"/>
    </ligand>
</feature>
<feature type="binding site" evidence="1">
    <location>
        <position position="132"/>
    </location>
    <ligand>
        <name>(2S)-2-hydroxy-3-oxobutyl phosphate</name>
        <dbReference type="ChEBI" id="CHEBI:58830"/>
    </ligand>
</feature>
<accession>B8H6T9</accession>
<reference key="1">
    <citation type="submission" date="2009-01" db="EMBL/GenBank/DDBJ databases">
        <title>Complete sequence of chromosome of Arthrobacter chlorophenolicus A6.</title>
        <authorList>
            <consortium name="US DOE Joint Genome Institute"/>
            <person name="Lucas S."/>
            <person name="Copeland A."/>
            <person name="Lapidus A."/>
            <person name="Glavina del Rio T."/>
            <person name="Tice H."/>
            <person name="Bruce D."/>
            <person name="Goodwin L."/>
            <person name="Pitluck S."/>
            <person name="Goltsman E."/>
            <person name="Clum A."/>
            <person name="Larimer F."/>
            <person name="Land M."/>
            <person name="Hauser L."/>
            <person name="Kyrpides N."/>
            <person name="Mikhailova N."/>
            <person name="Jansson J."/>
            <person name="Richardson P."/>
        </authorList>
    </citation>
    <scope>NUCLEOTIDE SEQUENCE [LARGE SCALE GENOMIC DNA]</scope>
    <source>
        <strain>ATCC 700700 / DSM 12829 / CIP 107037 / JCM 12360 / KCTC 9906 / NCIMB 13794 / A6</strain>
    </source>
</reference>
<gene>
    <name evidence="1" type="primary">ribH</name>
    <name type="ordered locus">Achl_1673</name>
</gene>
<dbReference type="EC" id="2.5.1.78" evidence="1"/>
<dbReference type="EMBL" id="CP001341">
    <property type="protein sequence ID" value="ACL39660.1"/>
    <property type="molecule type" value="Genomic_DNA"/>
</dbReference>
<dbReference type="RefSeq" id="WP_015936880.1">
    <property type="nucleotide sequence ID" value="NC_011886.1"/>
</dbReference>
<dbReference type="SMR" id="B8H6T9"/>
<dbReference type="STRING" id="452863.Achl_1673"/>
<dbReference type="KEGG" id="ach:Achl_1673"/>
<dbReference type="eggNOG" id="COG0054">
    <property type="taxonomic scope" value="Bacteria"/>
</dbReference>
<dbReference type="HOGENOM" id="CLU_089358_1_1_11"/>
<dbReference type="OrthoDB" id="9809709at2"/>
<dbReference type="UniPathway" id="UPA00275">
    <property type="reaction ID" value="UER00404"/>
</dbReference>
<dbReference type="Proteomes" id="UP000002505">
    <property type="component" value="Chromosome"/>
</dbReference>
<dbReference type="GO" id="GO:0005829">
    <property type="term" value="C:cytosol"/>
    <property type="evidence" value="ECO:0007669"/>
    <property type="project" value="TreeGrafter"/>
</dbReference>
<dbReference type="GO" id="GO:0009349">
    <property type="term" value="C:riboflavin synthase complex"/>
    <property type="evidence" value="ECO:0007669"/>
    <property type="project" value="InterPro"/>
</dbReference>
<dbReference type="GO" id="GO:0000906">
    <property type="term" value="F:6,7-dimethyl-8-ribityllumazine synthase activity"/>
    <property type="evidence" value="ECO:0007669"/>
    <property type="project" value="UniProtKB-UniRule"/>
</dbReference>
<dbReference type="GO" id="GO:0009231">
    <property type="term" value="P:riboflavin biosynthetic process"/>
    <property type="evidence" value="ECO:0007669"/>
    <property type="project" value="UniProtKB-UniRule"/>
</dbReference>
<dbReference type="CDD" id="cd09209">
    <property type="entry name" value="Lumazine_synthase-I"/>
    <property type="match status" value="1"/>
</dbReference>
<dbReference type="Gene3D" id="3.40.50.960">
    <property type="entry name" value="Lumazine/riboflavin synthase"/>
    <property type="match status" value="1"/>
</dbReference>
<dbReference type="HAMAP" id="MF_00178">
    <property type="entry name" value="Lumazine_synth"/>
    <property type="match status" value="1"/>
</dbReference>
<dbReference type="InterPro" id="IPR034964">
    <property type="entry name" value="LS"/>
</dbReference>
<dbReference type="InterPro" id="IPR002180">
    <property type="entry name" value="LS/RS"/>
</dbReference>
<dbReference type="InterPro" id="IPR036467">
    <property type="entry name" value="LS/RS_sf"/>
</dbReference>
<dbReference type="NCBIfam" id="TIGR00114">
    <property type="entry name" value="lumazine-synth"/>
    <property type="match status" value="1"/>
</dbReference>
<dbReference type="PANTHER" id="PTHR21058:SF0">
    <property type="entry name" value="6,7-DIMETHYL-8-RIBITYLLUMAZINE SYNTHASE"/>
    <property type="match status" value="1"/>
</dbReference>
<dbReference type="PANTHER" id="PTHR21058">
    <property type="entry name" value="6,7-DIMETHYL-8-RIBITYLLUMAZINE SYNTHASE DMRL SYNTHASE LUMAZINE SYNTHASE"/>
    <property type="match status" value="1"/>
</dbReference>
<dbReference type="Pfam" id="PF00885">
    <property type="entry name" value="DMRL_synthase"/>
    <property type="match status" value="1"/>
</dbReference>
<dbReference type="SUPFAM" id="SSF52121">
    <property type="entry name" value="Lumazine synthase"/>
    <property type="match status" value="1"/>
</dbReference>
<evidence type="ECO:0000255" key="1">
    <source>
        <dbReference type="HAMAP-Rule" id="MF_00178"/>
    </source>
</evidence>
<name>RISB_PSECP</name>
<organism>
    <name type="scientific">Pseudarthrobacter chlorophenolicus (strain ATCC 700700 / DSM 12829 / CIP 107037 / JCM 12360 / KCTC 9906 / NCIMB 13794 / A6)</name>
    <name type="common">Arthrobacter chlorophenolicus</name>
    <dbReference type="NCBI Taxonomy" id="452863"/>
    <lineage>
        <taxon>Bacteria</taxon>
        <taxon>Bacillati</taxon>
        <taxon>Actinomycetota</taxon>
        <taxon>Actinomycetes</taxon>
        <taxon>Micrococcales</taxon>
        <taxon>Micrococcaceae</taxon>
        <taxon>Pseudarthrobacter</taxon>
    </lineage>
</organism>
<protein>
    <recommendedName>
        <fullName evidence="1">6,7-dimethyl-8-ribityllumazine synthase</fullName>
        <shortName evidence="1">DMRL synthase</shortName>
        <shortName evidence="1">LS</shortName>
        <shortName evidence="1">Lumazine synthase</shortName>
        <ecNumber evidence="1">2.5.1.78</ecNumber>
    </recommendedName>
</protein>
<keyword id="KW-0686">Riboflavin biosynthesis</keyword>
<keyword id="KW-0808">Transferase</keyword>
<sequence>MSGHGAPDIDLTTLNPAETSQLRLAIVAASWHTQIMDGLLDGALRAAKDAGINEPTVIRVPGSFELPVAAARLAPHFDAVVALGVVIRGGTPHFEYVCQAATSGLTDVSVRTGVPVGFGVLTCDTEQQGLDRAGLPGSKEDKGHEAVTAALATAVVLKQYS</sequence>
<comment type="function">
    <text evidence="1">Catalyzes the formation of 6,7-dimethyl-8-ribityllumazine by condensation of 5-amino-6-(D-ribitylamino)uracil with 3,4-dihydroxy-2-butanone 4-phosphate. This is the penultimate step in the biosynthesis of riboflavin.</text>
</comment>
<comment type="catalytic activity">
    <reaction evidence="1">
        <text>(2S)-2-hydroxy-3-oxobutyl phosphate + 5-amino-6-(D-ribitylamino)uracil = 6,7-dimethyl-8-(1-D-ribityl)lumazine + phosphate + 2 H2O + H(+)</text>
        <dbReference type="Rhea" id="RHEA:26152"/>
        <dbReference type="ChEBI" id="CHEBI:15377"/>
        <dbReference type="ChEBI" id="CHEBI:15378"/>
        <dbReference type="ChEBI" id="CHEBI:15934"/>
        <dbReference type="ChEBI" id="CHEBI:43474"/>
        <dbReference type="ChEBI" id="CHEBI:58201"/>
        <dbReference type="ChEBI" id="CHEBI:58830"/>
        <dbReference type="EC" id="2.5.1.78"/>
    </reaction>
</comment>
<comment type="pathway">
    <text evidence="1">Cofactor biosynthesis; riboflavin biosynthesis; riboflavin from 2-hydroxy-3-oxobutyl phosphate and 5-amino-6-(D-ribitylamino)uracil: step 1/2.</text>
</comment>
<comment type="similarity">
    <text evidence="1">Belongs to the DMRL synthase family.</text>
</comment>